<sequence>MVNLLKELEQEQCRNDLPEFHVGDTIRLATKISEGGKERVQVFQGTVMARRGGGSGETVSLHRVAYGEGMEKSFLLNSPRIVSIEIVKRGKVARARLYYLRGKTGKAAKVKEFVGPRSSKK</sequence>
<name>RL19_CHLPN</name>
<reference key="1">
    <citation type="journal article" date="1999" name="Nat. Genet.">
        <title>Comparative genomes of Chlamydia pneumoniae and C. trachomatis.</title>
        <authorList>
            <person name="Kalman S."/>
            <person name="Mitchell W.P."/>
            <person name="Marathe R."/>
            <person name="Lammel C.J."/>
            <person name="Fan J."/>
            <person name="Hyman R.W."/>
            <person name="Olinger L."/>
            <person name="Grimwood J."/>
            <person name="Davis R.W."/>
            <person name="Stephens R.S."/>
        </authorList>
    </citation>
    <scope>NUCLEOTIDE SEQUENCE [LARGE SCALE GENOMIC DNA]</scope>
    <source>
        <strain>CWL029</strain>
    </source>
</reference>
<reference key="2">
    <citation type="journal article" date="2000" name="Nucleic Acids Res.">
        <title>Genome sequences of Chlamydia trachomatis MoPn and Chlamydia pneumoniae AR39.</title>
        <authorList>
            <person name="Read T.D."/>
            <person name="Brunham R.C."/>
            <person name="Shen C."/>
            <person name="Gill S.R."/>
            <person name="Heidelberg J.F."/>
            <person name="White O."/>
            <person name="Hickey E.K."/>
            <person name="Peterson J.D."/>
            <person name="Utterback T.R."/>
            <person name="Berry K.J."/>
            <person name="Bass S."/>
            <person name="Linher K.D."/>
            <person name="Weidman J.F."/>
            <person name="Khouri H.M."/>
            <person name="Craven B."/>
            <person name="Bowman C."/>
            <person name="Dodson R.J."/>
            <person name="Gwinn M.L."/>
            <person name="Nelson W.C."/>
            <person name="DeBoy R.T."/>
            <person name="Kolonay J.F."/>
            <person name="McClarty G."/>
            <person name="Salzberg S.L."/>
            <person name="Eisen J.A."/>
            <person name="Fraser C.M."/>
        </authorList>
    </citation>
    <scope>NUCLEOTIDE SEQUENCE [LARGE SCALE GENOMIC DNA]</scope>
    <source>
        <strain>AR39</strain>
    </source>
</reference>
<reference key="3">
    <citation type="journal article" date="2000" name="Nucleic Acids Res.">
        <title>Comparison of whole genome sequences of Chlamydia pneumoniae J138 from Japan and CWL029 from USA.</title>
        <authorList>
            <person name="Shirai M."/>
            <person name="Hirakawa H."/>
            <person name="Kimoto M."/>
            <person name="Tabuchi M."/>
            <person name="Kishi F."/>
            <person name="Ouchi K."/>
            <person name="Shiba T."/>
            <person name="Ishii K."/>
            <person name="Hattori M."/>
            <person name="Kuhara S."/>
            <person name="Nakazawa T."/>
        </authorList>
    </citation>
    <scope>NUCLEOTIDE SEQUENCE [LARGE SCALE GENOMIC DNA]</scope>
    <source>
        <strain>J138</strain>
    </source>
</reference>
<reference key="4">
    <citation type="submission" date="2002-05" db="EMBL/GenBank/DDBJ databases">
        <title>The genome sequence of Chlamydia pneumoniae TW183 and comparison with other Chlamydia strains based on whole genome sequence analysis.</title>
        <authorList>
            <person name="Geng M.M."/>
            <person name="Schuhmacher A."/>
            <person name="Muehldorfer I."/>
            <person name="Bensch K.W."/>
            <person name="Schaefer K.P."/>
            <person name="Schneider S."/>
            <person name="Pohl T."/>
            <person name="Essig A."/>
            <person name="Marre R."/>
            <person name="Melchers K."/>
        </authorList>
    </citation>
    <scope>NUCLEOTIDE SEQUENCE [LARGE SCALE GENOMIC DNA]</scope>
    <source>
        <strain>TW-183</strain>
    </source>
</reference>
<proteinExistence type="inferred from homology"/>
<gene>
    <name type="primary">rplS</name>
    <name type="synonym">rl19</name>
    <name type="ordered locus">CPn_0118</name>
    <name type="ordered locus">CP_0655</name>
    <name type="ordered locus">CpB0119</name>
</gene>
<accession>Q9Z963</accession>
<accession>Q9JQB7</accession>
<evidence type="ECO:0000250" key="1"/>
<evidence type="ECO:0000305" key="2"/>
<organism>
    <name type="scientific">Chlamydia pneumoniae</name>
    <name type="common">Chlamydophila pneumoniae</name>
    <dbReference type="NCBI Taxonomy" id="83558"/>
    <lineage>
        <taxon>Bacteria</taxon>
        <taxon>Pseudomonadati</taxon>
        <taxon>Chlamydiota</taxon>
        <taxon>Chlamydiia</taxon>
        <taxon>Chlamydiales</taxon>
        <taxon>Chlamydiaceae</taxon>
        <taxon>Chlamydia/Chlamydophila group</taxon>
        <taxon>Chlamydia</taxon>
    </lineage>
</organism>
<dbReference type="EMBL" id="AE001363">
    <property type="protein sequence ID" value="AAD18271.1"/>
    <property type="molecule type" value="Genomic_DNA"/>
</dbReference>
<dbReference type="EMBL" id="AE002161">
    <property type="protein sequence ID" value="AAF38469.1"/>
    <property type="molecule type" value="Genomic_DNA"/>
</dbReference>
<dbReference type="EMBL" id="BA000008">
    <property type="protein sequence ID" value="BAA98329.1"/>
    <property type="molecule type" value="Genomic_DNA"/>
</dbReference>
<dbReference type="EMBL" id="AE009440">
    <property type="protein sequence ID" value="AAP98052.1"/>
    <property type="molecule type" value="Genomic_DNA"/>
</dbReference>
<dbReference type="PIR" id="D72117">
    <property type="entry name" value="D72117"/>
</dbReference>
<dbReference type="PIR" id="G86505">
    <property type="entry name" value="G86505"/>
</dbReference>
<dbReference type="RefSeq" id="NP_224326.1">
    <property type="nucleotide sequence ID" value="NC_000922.1"/>
</dbReference>
<dbReference type="RefSeq" id="WP_010882768.1">
    <property type="nucleotide sequence ID" value="NZ_LN847257.1"/>
</dbReference>
<dbReference type="SMR" id="Q9Z963"/>
<dbReference type="STRING" id="406984.CPK_ORF00630"/>
<dbReference type="GeneID" id="45050163"/>
<dbReference type="KEGG" id="cpa:CP_0655"/>
<dbReference type="KEGG" id="cpj:rl19"/>
<dbReference type="KEGG" id="cpn:CPn_0118"/>
<dbReference type="KEGG" id="cpt:CpB0119"/>
<dbReference type="PATRIC" id="fig|115713.3.peg.133"/>
<dbReference type="eggNOG" id="COG0335">
    <property type="taxonomic scope" value="Bacteria"/>
</dbReference>
<dbReference type="HOGENOM" id="CLU_103507_2_1_0"/>
<dbReference type="OMA" id="TITVYYE"/>
<dbReference type="OrthoDB" id="9803541at2"/>
<dbReference type="Proteomes" id="UP000000583">
    <property type="component" value="Chromosome"/>
</dbReference>
<dbReference type="Proteomes" id="UP000000801">
    <property type="component" value="Chromosome"/>
</dbReference>
<dbReference type="GO" id="GO:0022625">
    <property type="term" value="C:cytosolic large ribosomal subunit"/>
    <property type="evidence" value="ECO:0007669"/>
    <property type="project" value="TreeGrafter"/>
</dbReference>
<dbReference type="GO" id="GO:0003735">
    <property type="term" value="F:structural constituent of ribosome"/>
    <property type="evidence" value="ECO:0007669"/>
    <property type="project" value="InterPro"/>
</dbReference>
<dbReference type="GO" id="GO:0006412">
    <property type="term" value="P:translation"/>
    <property type="evidence" value="ECO:0007669"/>
    <property type="project" value="UniProtKB-UniRule"/>
</dbReference>
<dbReference type="Gene3D" id="2.30.30.790">
    <property type="match status" value="1"/>
</dbReference>
<dbReference type="HAMAP" id="MF_00402">
    <property type="entry name" value="Ribosomal_bL19"/>
    <property type="match status" value="1"/>
</dbReference>
<dbReference type="InterPro" id="IPR001857">
    <property type="entry name" value="Ribosomal_bL19"/>
</dbReference>
<dbReference type="InterPro" id="IPR018257">
    <property type="entry name" value="Ribosomal_bL19_CS"/>
</dbReference>
<dbReference type="InterPro" id="IPR038657">
    <property type="entry name" value="Ribosomal_bL19_sf"/>
</dbReference>
<dbReference type="InterPro" id="IPR008991">
    <property type="entry name" value="Translation_prot_SH3-like_sf"/>
</dbReference>
<dbReference type="NCBIfam" id="TIGR01024">
    <property type="entry name" value="rplS_bact"/>
    <property type="match status" value="1"/>
</dbReference>
<dbReference type="PANTHER" id="PTHR15680:SF9">
    <property type="entry name" value="LARGE RIBOSOMAL SUBUNIT PROTEIN BL19M"/>
    <property type="match status" value="1"/>
</dbReference>
<dbReference type="PANTHER" id="PTHR15680">
    <property type="entry name" value="RIBOSOMAL PROTEIN L19"/>
    <property type="match status" value="1"/>
</dbReference>
<dbReference type="Pfam" id="PF01245">
    <property type="entry name" value="Ribosomal_L19"/>
    <property type="match status" value="1"/>
</dbReference>
<dbReference type="PIRSF" id="PIRSF002191">
    <property type="entry name" value="Ribosomal_L19"/>
    <property type="match status" value="1"/>
</dbReference>
<dbReference type="PRINTS" id="PR00061">
    <property type="entry name" value="RIBOSOMALL19"/>
</dbReference>
<dbReference type="SUPFAM" id="SSF50104">
    <property type="entry name" value="Translation proteins SH3-like domain"/>
    <property type="match status" value="1"/>
</dbReference>
<dbReference type="PROSITE" id="PS01015">
    <property type="entry name" value="RIBOSOMAL_L19"/>
    <property type="match status" value="1"/>
</dbReference>
<keyword id="KW-0687">Ribonucleoprotein</keyword>
<keyword id="KW-0689">Ribosomal protein</keyword>
<feature type="chain" id="PRO_0000163437" description="Large ribosomal subunit protein bL19">
    <location>
        <begin position="1"/>
        <end position="121"/>
    </location>
</feature>
<protein>
    <recommendedName>
        <fullName evidence="2">Large ribosomal subunit protein bL19</fullName>
    </recommendedName>
    <alternativeName>
        <fullName>50S ribosomal protein L19</fullName>
    </alternativeName>
</protein>
<comment type="function">
    <text evidence="1">This protein is located at the 30S-50S ribosomal subunit interface and may play a role in the structure and function of the aminoacyl-tRNA binding site.</text>
</comment>
<comment type="similarity">
    <text evidence="2">Belongs to the bacterial ribosomal protein bL19 family.</text>
</comment>